<dbReference type="EMBL" id="BX950851">
    <property type="protein sequence ID" value="CAG75454.1"/>
    <property type="molecule type" value="Genomic_DNA"/>
</dbReference>
<dbReference type="RefSeq" id="WP_011094100.1">
    <property type="nucleotide sequence ID" value="NC_004547.2"/>
</dbReference>
<dbReference type="SMR" id="Q6D439"/>
<dbReference type="STRING" id="218491.ECA2555"/>
<dbReference type="DNASU" id="2881419"/>
<dbReference type="KEGG" id="eca:ECA2555"/>
<dbReference type="PATRIC" id="fig|218491.5.peg.2590"/>
<dbReference type="eggNOG" id="COG2835">
    <property type="taxonomic scope" value="Bacteria"/>
</dbReference>
<dbReference type="HOGENOM" id="CLU_155659_3_1_6"/>
<dbReference type="OrthoDB" id="9812205at2"/>
<dbReference type="Proteomes" id="UP000007966">
    <property type="component" value="Chromosome"/>
</dbReference>
<dbReference type="GO" id="GO:0005829">
    <property type="term" value="C:cytosol"/>
    <property type="evidence" value="ECO:0007669"/>
    <property type="project" value="TreeGrafter"/>
</dbReference>
<dbReference type="FunFam" id="2.20.25.10:FF:000002">
    <property type="entry name" value="UPF0434 protein YcaR"/>
    <property type="match status" value="1"/>
</dbReference>
<dbReference type="Gene3D" id="2.20.25.10">
    <property type="match status" value="1"/>
</dbReference>
<dbReference type="HAMAP" id="MF_01187">
    <property type="entry name" value="UPF0434"/>
    <property type="match status" value="1"/>
</dbReference>
<dbReference type="InterPro" id="IPR005651">
    <property type="entry name" value="Trm112-like"/>
</dbReference>
<dbReference type="PANTHER" id="PTHR33505:SF4">
    <property type="entry name" value="PROTEIN PREY, MITOCHONDRIAL"/>
    <property type="match status" value="1"/>
</dbReference>
<dbReference type="PANTHER" id="PTHR33505">
    <property type="entry name" value="ZGC:162634"/>
    <property type="match status" value="1"/>
</dbReference>
<dbReference type="Pfam" id="PF03966">
    <property type="entry name" value="Trm112p"/>
    <property type="match status" value="1"/>
</dbReference>
<dbReference type="SUPFAM" id="SSF158997">
    <property type="entry name" value="Trm112p-like"/>
    <property type="match status" value="1"/>
</dbReference>
<feature type="chain" id="PRO_0000291089" description="UPF0434 protein ECA2555">
    <location>
        <begin position="1"/>
        <end position="60"/>
    </location>
</feature>
<proteinExistence type="inferred from homology"/>
<keyword id="KW-1185">Reference proteome</keyword>
<gene>
    <name type="ordered locus">ECA2555</name>
</gene>
<name>Y2555_PECAS</name>
<evidence type="ECO:0000255" key="1">
    <source>
        <dbReference type="HAMAP-Rule" id="MF_01187"/>
    </source>
</evidence>
<protein>
    <recommendedName>
        <fullName evidence="1">UPF0434 protein ECA2555</fullName>
    </recommendedName>
</protein>
<reference key="1">
    <citation type="journal article" date="2004" name="Proc. Natl. Acad. Sci. U.S.A.">
        <title>Genome sequence of the enterobacterial phytopathogen Erwinia carotovora subsp. atroseptica and characterization of virulence factors.</title>
        <authorList>
            <person name="Bell K.S."/>
            <person name="Sebaihia M."/>
            <person name="Pritchard L."/>
            <person name="Holden M.T.G."/>
            <person name="Hyman L.J."/>
            <person name="Holeva M.C."/>
            <person name="Thomson N.R."/>
            <person name="Bentley S.D."/>
            <person name="Churcher L.J.C."/>
            <person name="Mungall K."/>
            <person name="Atkin R."/>
            <person name="Bason N."/>
            <person name="Brooks K."/>
            <person name="Chillingworth T."/>
            <person name="Clark K."/>
            <person name="Doggett J."/>
            <person name="Fraser A."/>
            <person name="Hance Z."/>
            <person name="Hauser H."/>
            <person name="Jagels K."/>
            <person name="Moule S."/>
            <person name="Norbertczak H."/>
            <person name="Ormond D."/>
            <person name="Price C."/>
            <person name="Quail M.A."/>
            <person name="Sanders M."/>
            <person name="Walker D."/>
            <person name="Whitehead S."/>
            <person name="Salmond G.P.C."/>
            <person name="Birch P.R.J."/>
            <person name="Parkhill J."/>
            <person name="Toth I.K."/>
        </authorList>
    </citation>
    <scope>NUCLEOTIDE SEQUENCE [LARGE SCALE GENOMIC DNA]</scope>
    <source>
        <strain>SCRI 1043 / ATCC BAA-672</strain>
    </source>
</reference>
<sequence>MDHRLLEIVACPVCNGRLYFNKEKLELICKADGLAYPVRDGIPVLLENEARKLGADEITQ</sequence>
<organism>
    <name type="scientific">Pectobacterium atrosepticum (strain SCRI 1043 / ATCC BAA-672)</name>
    <name type="common">Erwinia carotovora subsp. atroseptica</name>
    <dbReference type="NCBI Taxonomy" id="218491"/>
    <lineage>
        <taxon>Bacteria</taxon>
        <taxon>Pseudomonadati</taxon>
        <taxon>Pseudomonadota</taxon>
        <taxon>Gammaproteobacteria</taxon>
        <taxon>Enterobacterales</taxon>
        <taxon>Pectobacteriaceae</taxon>
        <taxon>Pectobacterium</taxon>
    </lineage>
</organism>
<accession>Q6D439</accession>
<comment type="similarity">
    <text evidence="1">Belongs to the UPF0434 family.</text>
</comment>